<accession>A8F4P7</accession>
<protein>
    <recommendedName>
        <fullName evidence="1">UvrABC system protein C</fullName>
        <shortName evidence="1">Protein UvrC</shortName>
    </recommendedName>
    <alternativeName>
        <fullName evidence="1">Excinuclease ABC subunit C</fullName>
    </alternativeName>
</protein>
<gene>
    <name evidence="1" type="primary">uvrC</name>
    <name type="ordered locus">Tlet_0565</name>
</gene>
<evidence type="ECO:0000255" key="1">
    <source>
        <dbReference type="HAMAP-Rule" id="MF_00203"/>
    </source>
</evidence>
<name>UVRC_PSELT</name>
<reference key="1">
    <citation type="submission" date="2007-08" db="EMBL/GenBank/DDBJ databases">
        <title>Complete sequence of Thermotoga lettingae TMO.</title>
        <authorList>
            <consortium name="US DOE Joint Genome Institute"/>
            <person name="Copeland A."/>
            <person name="Lucas S."/>
            <person name="Lapidus A."/>
            <person name="Barry K."/>
            <person name="Glavina del Rio T."/>
            <person name="Dalin E."/>
            <person name="Tice H."/>
            <person name="Pitluck S."/>
            <person name="Foster B."/>
            <person name="Bruce D."/>
            <person name="Schmutz J."/>
            <person name="Larimer F."/>
            <person name="Land M."/>
            <person name="Hauser L."/>
            <person name="Kyrpides N."/>
            <person name="Mikhailova N."/>
            <person name="Nelson K."/>
            <person name="Gogarten J.P."/>
            <person name="Noll K."/>
            <person name="Richardson P."/>
        </authorList>
    </citation>
    <scope>NUCLEOTIDE SEQUENCE [LARGE SCALE GENOMIC DNA]</scope>
    <source>
        <strain>ATCC BAA-301 / DSM 14385 / NBRC 107922 / TMO</strain>
    </source>
</reference>
<comment type="function">
    <text evidence="1">The UvrABC repair system catalyzes the recognition and processing of DNA lesions. UvrC both incises the 5' and 3' sides of the lesion. The N-terminal half is responsible for the 3' incision and the C-terminal half is responsible for the 5' incision.</text>
</comment>
<comment type="subunit">
    <text evidence="1">Interacts with UvrB in an incision complex.</text>
</comment>
<comment type="subcellular location">
    <subcellularLocation>
        <location evidence="1">Cytoplasm</location>
    </subcellularLocation>
</comment>
<comment type="similarity">
    <text evidence="1">Belongs to the UvrC family.</text>
</comment>
<sequence>MDLLHKAKLAPLLPGVYIFYGKNKEYIYVGKAKRLRNRLLSYFNRSNGKYSKKIQAIVNEAEELDYIVVSNEREALLLEANLIFNHKPKYNVMLKDAEFYPYIEITKELFPAVQIVRIRSTGGEYFGPYTDVKFVKDLIDCLQQVYQFRTCRRDMSKSTKPCMEFYMHRCAAPCTGDLEPDSYINSSIQPLRRVLNGDISETLDLIEEKMKKHAKMMDFENAAKYRDLLVKFENVMQRQGVVLEQWRNLDVIGRFKNSYAVLRIRGGHVVGKLSYELDSTKLEDFIFHYYMVGKNELPEAVILERNINFDAEIYFGRPRDKLEEELLHKARENAKNQAYTSGLRKDLLNKMVKVLNLNRYPMKIEGFDVSHLHGKLTVASVVVFFDGLPRKNEYRHYRFNSDRIDDFLTLKELVKRRYSKHELPDMIFVDGGTGQINAVVEALMEIGKECDVVGLAKQNEIVCTRFGELILPFDSPILRTLVRIRDEAHRFANSFHRKLRRKSALSSILDEIPGIGPKRKKKLIEAFGSVKNIRSATLQEIAEVLGSRKLAAEILSRL</sequence>
<organism>
    <name type="scientific">Pseudothermotoga lettingae (strain ATCC BAA-301 / DSM 14385 / NBRC 107922 / TMO)</name>
    <name type="common">Thermotoga lettingae</name>
    <dbReference type="NCBI Taxonomy" id="416591"/>
    <lineage>
        <taxon>Bacteria</taxon>
        <taxon>Thermotogati</taxon>
        <taxon>Thermotogota</taxon>
        <taxon>Thermotogae</taxon>
        <taxon>Thermotogales</taxon>
        <taxon>Thermotogaceae</taxon>
        <taxon>Pseudothermotoga</taxon>
    </lineage>
</organism>
<dbReference type="EMBL" id="CP000812">
    <property type="protein sequence ID" value="ABV33131.1"/>
    <property type="molecule type" value="Genomic_DNA"/>
</dbReference>
<dbReference type="RefSeq" id="WP_012002612.1">
    <property type="nucleotide sequence ID" value="NZ_BSDV01000001.1"/>
</dbReference>
<dbReference type="SMR" id="A8F4P7"/>
<dbReference type="STRING" id="416591.Tlet_0565"/>
<dbReference type="KEGG" id="tle:Tlet_0565"/>
<dbReference type="eggNOG" id="COG0322">
    <property type="taxonomic scope" value="Bacteria"/>
</dbReference>
<dbReference type="HOGENOM" id="CLU_014841_3_2_0"/>
<dbReference type="OrthoDB" id="9804933at2"/>
<dbReference type="Proteomes" id="UP000002016">
    <property type="component" value="Chromosome"/>
</dbReference>
<dbReference type="GO" id="GO:0005737">
    <property type="term" value="C:cytoplasm"/>
    <property type="evidence" value="ECO:0007669"/>
    <property type="project" value="UniProtKB-SubCell"/>
</dbReference>
<dbReference type="GO" id="GO:0009380">
    <property type="term" value="C:excinuclease repair complex"/>
    <property type="evidence" value="ECO:0007669"/>
    <property type="project" value="InterPro"/>
</dbReference>
<dbReference type="GO" id="GO:0003677">
    <property type="term" value="F:DNA binding"/>
    <property type="evidence" value="ECO:0007669"/>
    <property type="project" value="UniProtKB-UniRule"/>
</dbReference>
<dbReference type="GO" id="GO:0009381">
    <property type="term" value="F:excinuclease ABC activity"/>
    <property type="evidence" value="ECO:0007669"/>
    <property type="project" value="UniProtKB-UniRule"/>
</dbReference>
<dbReference type="GO" id="GO:0006289">
    <property type="term" value="P:nucleotide-excision repair"/>
    <property type="evidence" value="ECO:0007669"/>
    <property type="project" value="UniProtKB-UniRule"/>
</dbReference>
<dbReference type="GO" id="GO:0009432">
    <property type="term" value="P:SOS response"/>
    <property type="evidence" value="ECO:0007669"/>
    <property type="project" value="UniProtKB-UniRule"/>
</dbReference>
<dbReference type="CDD" id="cd10434">
    <property type="entry name" value="GIY-YIG_UvrC_Cho"/>
    <property type="match status" value="1"/>
</dbReference>
<dbReference type="FunFam" id="3.40.1440.10:FF:000001">
    <property type="entry name" value="UvrABC system protein C"/>
    <property type="match status" value="1"/>
</dbReference>
<dbReference type="Gene3D" id="1.10.150.20">
    <property type="entry name" value="5' to 3' exonuclease, C-terminal subdomain"/>
    <property type="match status" value="1"/>
</dbReference>
<dbReference type="Gene3D" id="3.40.1440.10">
    <property type="entry name" value="GIY-YIG endonuclease"/>
    <property type="match status" value="1"/>
</dbReference>
<dbReference type="Gene3D" id="4.10.860.10">
    <property type="entry name" value="UVR domain"/>
    <property type="match status" value="1"/>
</dbReference>
<dbReference type="Gene3D" id="3.30.420.340">
    <property type="entry name" value="UvrC, RNAse H endonuclease domain"/>
    <property type="match status" value="1"/>
</dbReference>
<dbReference type="HAMAP" id="MF_00203">
    <property type="entry name" value="UvrC"/>
    <property type="match status" value="1"/>
</dbReference>
<dbReference type="InterPro" id="IPR000305">
    <property type="entry name" value="GIY-YIG_endonuc"/>
</dbReference>
<dbReference type="InterPro" id="IPR035901">
    <property type="entry name" value="GIY-YIG_endonuc_sf"/>
</dbReference>
<dbReference type="InterPro" id="IPR047296">
    <property type="entry name" value="GIY-YIG_UvrC_Cho"/>
</dbReference>
<dbReference type="InterPro" id="IPR010994">
    <property type="entry name" value="RuvA_2-like"/>
</dbReference>
<dbReference type="InterPro" id="IPR001943">
    <property type="entry name" value="UVR_dom"/>
</dbReference>
<dbReference type="InterPro" id="IPR036876">
    <property type="entry name" value="UVR_dom_sf"/>
</dbReference>
<dbReference type="InterPro" id="IPR050066">
    <property type="entry name" value="UvrABC_protein_C"/>
</dbReference>
<dbReference type="InterPro" id="IPR004791">
    <property type="entry name" value="UvrC"/>
</dbReference>
<dbReference type="InterPro" id="IPR001162">
    <property type="entry name" value="UvrC_RNase_H_dom"/>
</dbReference>
<dbReference type="InterPro" id="IPR038476">
    <property type="entry name" value="UvrC_RNase_H_dom_sf"/>
</dbReference>
<dbReference type="NCBIfam" id="TIGR00194">
    <property type="entry name" value="uvrC"/>
    <property type="match status" value="1"/>
</dbReference>
<dbReference type="PANTHER" id="PTHR30562:SF1">
    <property type="entry name" value="UVRABC SYSTEM PROTEIN C"/>
    <property type="match status" value="1"/>
</dbReference>
<dbReference type="PANTHER" id="PTHR30562">
    <property type="entry name" value="UVRC/OXIDOREDUCTASE"/>
    <property type="match status" value="1"/>
</dbReference>
<dbReference type="Pfam" id="PF01541">
    <property type="entry name" value="GIY-YIG"/>
    <property type="match status" value="1"/>
</dbReference>
<dbReference type="Pfam" id="PF14520">
    <property type="entry name" value="HHH_5"/>
    <property type="match status" value="1"/>
</dbReference>
<dbReference type="Pfam" id="PF02151">
    <property type="entry name" value="UVR"/>
    <property type="match status" value="1"/>
</dbReference>
<dbReference type="Pfam" id="PF08459">
    <property type="entry name" value="UvrC_RNaseH_dom"/>
    <property type="match status" value="1"/>
</dbReference>
<dbReference type="SMART" id="SM00465">
    <property type="entry name" value="GIYc"/>
    <property type="match status" value="1"/>
</dbReference>
<dbReference type="SUPFAM" id="SSF46600">
    <property type="entry name" value="C-terminal UvrC-binding domain of UvrB"/>
    <property type="match status" value="1"/>
</dbReference>
<dbReference type="SUPFAM" id="SSF82771">
    <property type="entry name" value="GIY-YIG endonuclease"/>
    <property type="match status" value="1"/>
</dbReference>
<dbReference type="SUPFAM" id="SSF47781">
    <property type="entry name" value="RuvA domain 2-like"/>
    <property type="match status" value="1"/>
</dbReference>
<dbReference type="PROSITE" id="PS50164">
    <property type="entry name" value="GIY_YIG"/>
    <property type="match status" value="1"/>
</dbReference>
<dbReference type="PROSITE" id="PS50151">
    <property type="entry name" value="UVR"/>
    <property type="match status" value="1"/>
</dbReference>
<dbReference type="PROSITE" id="PS50165">
    <property type="entry name" value="UVRC"/>
    <property type="match status" value="1"/>
</dbReference>
<feature type="chain" id="PRO_1000099528" description="UvrABC system protein C">
    <location>
        <begin position="1"/>
        <end position="558"/>
    </location>
</feature>
<feature type="domain" description="GIY-YIG" evidence="1">
    <location>
        <begin position="12"/>
        <end position="92"/>
    </location>
</feature>
<feature type="domain" description="UVR" evidence="1">
    <location>
        <begin position="200"/>
        <end position="235"/>
    </location>
</feature>
<keyword id="KW-0963">Cytoplasm</keyword>
<keyword id="KW-0227">DNA damage</keyword>
<keyword id="KW-0228">DNA excision</keyword>
<keyword id="KW-0234">DNA repair</keyword>
<keyword id="KW-0267">Excision nuclease</keyword>
<keyword id="KW-1185">Reference proteome</keyword>
<keyword id="KW-0742">SOS response</keyword>
<proteinExistence type="inferred from homology"/>